<proteinExistence type="inferred from homology"/>
<keyword id="KW-1015">Disulfide bond</keyword>
<keyword id="KW-0472">Membrane</keyword>
<keyword id="KW-0496">Mitochondrion</keyword>
<keyword id="KW-0999">Mitochondrion inner membrane</keyword>
<keyword id="KW-0653">Protein transport</keyword>
<keyword id="KW-0811">Translocation</keyword>
<keyword id="KW-0812">Transmembrane</keyword>
<keyword id="KW-1133">Transmembrane helix</keyword>
<keyword id="KW-0813">Transport</keyword>
<gene>
    <name type="primary">TIM22</name>
    <name type="ordered locus">CNBC4640</name>
</gene>
<evidence type="ECO:0000250" key="1">
    <source>
        <dbReference type="UniProtKB" id="A0A1D8PI78"/>
    </source>
</evidence>
<evidence type="ECO:0000250" key="2">
    <source>
        <dbReference type="UniProtKB" id="Q12328"/>
    </source>
</evidence>
<evidence type="ECO:0000255" key="3"/>
<evidence type="ECO:0000305" key="4"/>
<protein>
    <recommendedName>
        <fullName>Mitochondrial import inner membrane translocase subunit TIM22</fullName>
    </recommendedName>
</protein>
<accession>P0CR89</accession>
<accession>Q55VM2</accession>
<accession>Q5KKL8</accession>
<feature type="chain" id="PRO_0000410306" description="Mitochondrial import inner membrane translocase subunit TIM22">
    <location>
        <begin position="1"/>
        <end position="187"/>
    </location>
</feature>
<feature type="transmembrane region" description="Helical" evidence="3">
    <location>
        <begin position="58"/>
        <end position="78"/>
    </location>
</feature>
<feature type="transmembrane region" description="Helical" evidence="3">
    <location>
        <begin position="138"/>
        <end position="154"/>
    </location>
</feature>
<feature type="transmembrane region" description="Helical" evidence="3">
    <location>
        <begin position="159"/>
        <end position="179"/>
    </location>
</feature>
<feature type="disulfide bond" evidence="1">
    <location>
        <begin position="52"/>
        <end position="127"/>
    </location>
</feature>
<comment type="function">
    <text evidence="2">Essential core component of the TIM22 complex, a complex that mediates the import and insertion of multi-pass transmembrane proteins into the mitochondrial inner membrane. In the TIM22 complex, it constitutes the voltage-activated and signal-gated channel. Forms a twin-pore translocase that uses the membrane potential as external driving force in 2 voltage-dependent steps (By similarity).</text>
</comment>
<comment type="subunit">
    <text evidence="2">Component of the TIM22 complex, whose core is composed of TIM22 and TIM54, associated with the 70 kDa heterohexamer composed of TIM9 and TIM10 (or TIM8 and TIM13).</text>
</comment>
<comment type="subcellular location">
    <subcellularLocation>
        <location evidence="2">Mitochondrion inner membrane</location>
        <topology evidence="3">Multi-pass membrane protein</topology>
    </subcellularLocation>
</comment>
<comment type="similarity">
    <text evidence="4">Belongs to the Tim17/Tim22/Tim23 family.</text>
</comment>
<sequence>MSIPLPSAMPLLPPIYLPGQEPLPAGTSDWERQEMQTALKYQRYMGMVMESCPLKVTIAGVGGLAIGGFFSLMSATFAYEDPLSRASNKLTTTRAQTMFVFKEMGRNMWSSGRGFAKVGMVYSGVECCIEGYRAKNDIYNGVSAGFLTGAILARNAGPTAMLGGGVAFAAFSGAIDWWLRSAPADEI</sequence>
<organism>
    <name type="scientific">Cryptococcus neoformans var. neoformans serotype D (strain B-3501A)</name>
    <name type="common">Filobasidiella neoformans</name>
    <dbReference type="NCBI Taxonomy" id="283643"/>
    <lineage>
        <taxon>Eukaryota</taxon>
        <taxon>Fungi</taxon>
        <taxon>Dikarya</taxon>
        <taxon>Basidiomycota</taxon>
        <taxon>Agaricomycotina</taxon>
        <taxon>Tremellomycetes</taxon>
        <taxon>Tremellales</taxon>
        <taxon>Cryptococcaceae</taxon>
        <taxon>Cryptococcus</taxon>
        <taxon>Cryptococcus neoformans species complex</taxon>
    </lineage>
</organism>
<dbReference type="EMBL" id="AAEY01000015">
    <property type="protein sequence ID" value="EAL21762.1"/>
    <property type="molecule type" value="Genomic_DNA"/>
</dbReference>
<dbReference type="RefSeq" id="XP_776409.1">
    <property type="nucleotide sequence ID" value="XM_771316.1"/>
</dbReference>
<dbReference type="SMR" id="P0CR89"/>
<dbReference type="EnsemblFungi" id="AAW42244">
    <property type="protein sequence ID" value="AAW42244"/>
    <property type="gene ID" value="CNC02580"/>
</dbReference>
<dbReference type="GeneID" id="4935129"/>
<dbReference type="KEGG" id="cnb:CNBC4640"/>
<dbReference type="VEuPathDB" id="FungiDB:CNBC4640"/>
<dbReference type="HOGENOM" id="CLU_091077_1_0_1"/>
<dbReference type="OrthoDB" id="6696at5206"/>
<dbReference type="GO" id="GO:0042721">
    <property type="term" value="C:TIM22 mitochondrial import inner membrane insertion complex"/>
    <property type="evidence" value="ECO:0007669"/>
    <property type="project" value="EnsemblFungi"/>
</dbReference>
<dbReference type="GO" id="GO:0030943">
    <property type="term" value="F:mitochondrion targeting sequence binding"/>
    <property type="evidence" value="ECO:0007669"/>
    <property type="project" value="EnsemblFungi"/>
</dbReference>
<dbReference type="GO" id="GO:0008320">
    <property type="term" value="F:protein transmembrane transporter activity"/>
    <property type="evidence" value="ECO:0007669"/>
    <property type="project" value="EnsemblFungi"/>
</dbReference>
<dbReference type="GO" id="GO:0005198">
    <property type="term" value="F:structural molecule activity"/>
    <property type="evidence" value="ECO:0007669"/>
    <property type="project" value="EnsemblFungi"/>
</dbReference>
<dbReference type="GO" id="GO:0045039">
    <property type="term" value="P:protein insertion into mitochondrial inner membrane"/>
    <property type="evidence" value="ECO:0007669"/>
    <property type="project" value="EnsemblFungi"/>
</dbReference>
<dbReference type="InterPro" id="IPR039175">
    <property type="entry name" value="TIM22"/>
</dbReference>
<dbReference type="PANTHER" id="PTHR14110">
    <property type="entry name" value="MITOCHONDRIAL IMPORT INNER MEMBRANE TRANSLOCASE SUBUNIT TIM22"/>
    <property type="match status" value="1"/>
</dbReference>
<dbReference type="PANTHER" id="PTHR14110:SF0">
    <property type="entry name" value="MITOCHONDRIAL IMPORT INNER MEMBRANE TRANSLOCASE SUBUNIT TIM22"/>
    <property type="match status" value="1"/>
</dbReference>
<dbReference type="Pfam" id="PF02466">
    <property type="entry name" value="Tim17"/>
    <property type="match status" value="1"/>
</dbReference>
<name>TIM22_CRYNB</name>
<reference key="1">
    <citation type="journal article" date="2005" name="Science">
        <title>The genome of the basidiomycetous yeast and human pathogen Cryptococcus neoformans.</title>
        <authorList>
            <person name="Loftus B.J."/>
            <person name="Fung E."/>
            <person name="Roncaglia P."/>
            <person name="Rowley D."/>
            <person name="Amedeo P."/>
            <person name="Bruno D."/>
            <person name="Vamathevan J."/>
            <person name="Miranda M."/>
            <person name="Anderson I.J."/>
            <person name="Fraser J.A."/>
            <person name="Allen J.E."/>
            <person name="Bosdet I.E."/>
            <person name="Brent M.R."/>
            <person name="Chiu R."/>
            <person name="Doering T.L."/>
            <person name="Donlin M.J."/>
            <person name="D'Souza C.A."/>
            <person name="Fox D.S."/>
            <person name="Grinberg V."/>
            <person name="Fu J."/>
            <person name="Fukushima M."/>
            <person name="Haas B.J."/>
            <person name="Huang J.C."/>
            <person name="Janbon G."/>
            <person name="Jones S.J.M."/>
            <person name="Koo H.L."/>
            <person name="Krzywinski M.I."/>
            <person name="Kwon-Chung K.J."/>
            <person name="Lengeler K.B."/>
            <person name="Maiti R."/>
            <person name="Marra M.A."/>
            <person name="Marra R.E."/>
            <person name="Mathewson C.A."/>
            <person name="Mitchell T.G."/>
            <person name="Pertea M."/>
            <person name="Riggs F.R."/>
            <person name="Salzberg S.L."/>
            <person name="Schein J.E."/>
            <person name="Shvartsbeyn A."/>
            <person name="Shin H."/>
            <person name="Shumway M."/>
            <person name="Specht C.A."/>
            <person name="Suh B.B."/>
            <person name="Tenney A."/>
            <person name="Utterback T.R."/>
            <person name="Wickes B.L."/>
            <person name="Wortman J.R."/>
            <person name="Wye N.H."/>
            <person name="Kronstad J.W."/>
            <person name="Lodge J.K."/>
            <person name="Heitman J."/>
            <person name="Davis R.W."/>
            <person name="Fraser C.M."/>
            <person name="Hyman R.W."/>
        </authorList>
    </citation>
    <scope>NUCLEOTIDE SEQUENCE [LARGE SCALE GENOMIC DNA]</scope>
    <source>
        <strain>B-3501A</strain>
    </source>
</reference>